<organism>
    <name type="scientific">Capsicum annuum</name>
    <name type="common">Capsicum pepper</name>
    <dbReference type="NCBI Taxonomy" id="4072"/>
    <lineage>
        <taxon>Eukaryota</taxon>
        <taxon>Viridiplantae</taxon>
        <taxon>Streptophyta</taxon>
        <taxon>Embryophyta</taxon>
        <taxon>Tracheophyta</taxon>
        <taxon>Spermatophyta</taxon>
        <taxon>Magnoliopsida</taxon>
        <taxon>eudicotyledons</taxon>
        <taxon>Gunneridae</taxon>
        <taxon>Pentapetalae</taxon>
        <taxon>asterids</taxon>
        <taxon>lamiids</taxon>
        <taxon>Solanales</taxon>
        <taxon>Solanaceae</taxon>
        <taxon>Solanoideae</taxon>
        <taxon>Capsiceae</taxon>
        <taxon>Capsicum</taxon>
    </lineage>
</organism>
<comment type="function">
    <text>Probably functions in cell division and growth processes.</text>
</comment>
<comment type="similarity">
    <text evidence="3">Belongs to the AAA ATPase family.</text>
</comment>
<feature type="chain" id="PRO_0000084584" description="Cell division cycle protein 48 homolog">
    <location>
        <begin position="1"/>
        <end position="805"/>
    </location>
</feature>
<feature type="region of interest" description="Disordered" evidence="2">
    <location>
        <begin position="783"/>
        <end position="805"/>
    </location>
</feature>
<feature type="binding site" evidence="1">
    <location>
        <begin position="249"/>
        <end position="256"/>
    </location>
    <ligand>
        <name>ATP</name>
        <dbReference type="ChEBI" id="CHEBI:30616"/>
    </ligand>
</feature>
<feature type="binding site" evidence="1">
    <location>
        <begin position="522"/>
        <end position="529"/>
    </location>
    <ligand>
        <name>ATP</name>
        <dbReference type="ChEBI" id="CHEBI:30616"/>
    </ligand>
</feature>
<accession>Q96372</accession>
<evidence type="ECO:0000255" key="1"/>
<evidence type="ECO:0000256" key="2">
    <source>
        <dbReference type="SAM" id="MobiDB-lite"/>
    </source>
</evidence>
<evidence type="ECO:0000305" key="3"/>
<dbReference type="EMBL" id="Y09396">
    <property type="protein sequence ID" value="CAA70565.1"/>
    <property type="molecule type" value="mRNA"/>
</dbReference>
<dbReference type="RefSeq" id="NP_001311572.1">
    <property type="nucleotide sequence ID" value="NM_001324643.1"/>
</dbReference>
<dbReference type="SMR" id="Q96372"/>
<dbReference type="GeneID" id="107847567"/>
<dbReference type="KEGG" id="cann:107847567"/>
<dbReference type="OrthoDB" id="27435at2759"/>
<dbReference type="GO" id="GO:0005524">
    <property type="term" value="F:ATP binding"/>
    <property type="evidence" value="ECO:0007669"/>
    <property type="project" value="UniProtKB-KW"/>
</dbReference>
<dbReference type="GO" id="GO:0016887">
    <property type="term" value="F:ATP hydrolysis activity"/>
    <property type="evidence" value="ECO:0007669"/>
    <property type="project" value="InterPro"/>
</dbReference>
<dbReference type="CDD" id="cd19519">
    <property type="entry name" value="RecA-like_CDC48_r1-like"/>
    <property type="match status" value="1"/>
</dbReference>
<dbReference type="CDD" id="cd19528">
    <property type="entry name" value="RecA-like_CDC48_r2-like"/>
    <property type="match status" value="1"/>
</dbReference>
<dbReference type="FunFam" id="1.10.8.60:FF:000004">
    <property type="entry name" value="Cell division control 48"/>
    <property type="match status" value="1"/>
</dbReference>
<dbReference type="FunFam" id="3.10.330.10:FF:000001">
    <property type="entry name" value="Cell division control 48"/>
    <property type="match status" value="1"/>
</dbReference>
<dbReference type="FunFam" id="2.40.40.20:FF:000003">
    <property type="entry name" value="Transitional endoplasmic reticulum ATPase"/>
    <property type="match status" value="1"/>
</dbReference>
<dbReference type="FunFam" id="3.40.50.300:FF:000012">
    <property type="entry name" value="Transitional endoplasmic reticulum ATPase"/>
    <property type="match status" value="1"/>
</dbReference>
<dbReference type="FunFam" id="3.40.50.300:FF:000048">
    <property type="entry name" value="Transitional endoplasmic reticulum ATPase"/>
    <property type="match status" value="1"/>
</dbReference>
<dbReference type="Gene3D" id="1.10.8.60">
    <property type="match status" value="1"/>
</dbReference>
<dbReference type="Gene3D" id="2.40.40.20">
    <property type="match status" value="1"/>
</dbReference>
<dbReference type="Gene3D" id="3.10.330.10">
    <property type="match status" value="1"/>
</dbReference>
<dbReference type="Gene3D" id="6.10.20.150">
    <property type="match status" value="1"/>
</dbReference>
<dbReference type="Gene3D" id="3.40.50.300">
    <property type="entry name" value="P-loop containing nucleotide triphosphate hydrolases"/>
    <property type="match status" value="2"/>
</dbReference>
<dbReference type="InterPro" id="IPR003593">
    <property type="entry name" value="AAA+_ATPase"/>
</dbReference>
<dbReference type="InterPro" id="IPR005938">
    <property type="entry name" value="AAA_ATPase_CDC48"/>
</dbReference>
<dbReference type="InterPro" id="IPR050168">
    <property type="entry name" value="AAA_ATPase_domain"/>
</dbReference>
<dbReference type="InterPro" id="IPR041569">
    <property type="entry name" value="AAA_lid_3"/>
</dbReference>
<dbReference type="InterPro" id="IPR009010">
    <property type="entry name" value="Asp_de-COase-like_dom_sf"/>
</dbReference>
<dbReference type="InterPro" id="IPR003959">
    <property type="entry name" value="ATPase_AAA_core"/>
</dbReference>
<dbReference type="InterPro" id="IPR003960">
    <property type="entry name" value="ATPase_AAA_CS"/>
</dbReference>
<dbReference type="InterPro" id="IPR004201">
    <property type="entry name" value="Cdc48_dom2"/>
</dbReference>
<dbReference type="InterPro" id="IPR029067">
    <property type="entry name" value="CDC48_domain_2-like_sf"/>
</dbReference>
<dbReference type="InterPro" id="IPR003338">
    <property type="entry name" value="CDC4_N-term_subdom"/>
</dbReference>
<dbReference type="InterPro" id="IPR027417">
    <property type="entry name" value="P-loop_NTPase"/>
</dbReference>
<dbReference type="NCBIfam" id="TIGR01243">
    <property type="entry name" value="CDC48"/>
    <property type="match status" value="1"/>
</dbReference>
<dbReference type="PANTHER" id="PTHR23077">
    <property type="entry name" value="AAA-FAMILY ATPASE"/>
    <property type="match status" value="1"/>
</dbReference>
<dbReference type="PANTHER" id="PTHR23077:SF165">
    <property type="entry name" value="CELL DIVISION CYCLE PROTEIN 48 HOMOLOG"/>
    <property type="match status" value="1"/>
</dbReference>
<dbReference type="Pfam" id="PF00004">
    <property type="entry name" value="AAA"/>
    <property type="match status" value="2"/>
</dbReference>
<dbReference type="Pfam" id="PF17862">
    <property type="entry name" value="AAA_lid_3"/>
    <property type="match status" value="2"/>
</dbReference>
<dbReference type="Pfam" id="PF02933">
    <property type="entry name" value="CDC48_2"/>
    <property type="match status" value="1"/>
</dbReference>
<dbReference type="Pfam" id="PF02359">
    <property type="entry name" value="CDC48_N"/>
    <property type="match status" value="1"/>
</dbReference>
<dbReference type="SMART" id="SM00382">
    <property type="entry name" value="AAA"/>
    <property type="match status" value="2"/>
</dbReference>
<dbReference type="SMART" id="SM01072">
    <property type="entry name" value="CDC48_2"/>
    <property type="match status" value="1"/>
</dbReference>
<dbReference type="SMART" id="SM01073">
    <property type="entry name" value="CDC48_N"/>
    <property type="match status" value="1"/>
</dbReference>
<dbReference type="SUPFAM" id="SSF50692">
    <property type="entry name" value="ADC-like"/>
    <property type="match status" value="1"/>
</dbReference>
<dbReference type="SUPFAM" id="SSF54585">
    <property type="entry name" value="Cdc48 domain 2-like"/>
    <property type="match status" value="1"/>
</dbReference>
<dbReference type="SUPFAM" id="SSF52540">
    <property type="entry name" value="P-loop containing nucleoside triphosphate hydrolases"/>
    <property type="match status" value="2"/>
</dbReference>
<dbReference type="PROSITE" id="PS00674">
    <property type="entry name" value="AAA"/>
    <property type="match status" value="2"/>
</dbReference>
<protein>
    <recommendedName>
        <fullName>Cell division cycle protein 48 homolog</fullName>
    </recommendedName>
</protein>
<proteinExistence type="evidence at transcript level"/>
<name>CDC48_CAPAN</name>
<gene>
    <name type="primary">CAFP</name>
</gene>
<keyword id="KW-0067">ATP-binding</keyword>
<keyword id="KW-0131">Cell cycle</keyword>
<keyword id="KW-0547">Nucleotide-binding</keyword>
<keyword id="KW-0677">Repeat</keyword>
<sequence length="805" mass="89331">MTDQAESSDSKNAKKDFSTAILERKKAANRLVVDEAVNDDNSVVALHPATMEKLQLFRGDTILIKGKKRKDTVVIALADETCDEPKIRMNKVVRSNLRVRLGDVVSVHQCPDVKYGKRVHILPIDDTIEGLTGDLFDAFLKPYFLEAYRPLRKGDNFLVRGGMRSVEFKVIETDPGEYCVVAPDTEIFCEGEPVKREDEERLDEVGYDDVGGVRKQMAQIRELVELPLRHPQLFKSIGVKPPKGILLYGPPGSGKTLIARAVANETGAFFFCINGPEIMSKLAGESESNLRKAFEEAEKNAPSIIFIDEIDSIAPKREKTHGEVERRIVSQLLTLMDGLKSRAHVIVMGATNRPNSIDPALRRFGRFDREIDIGVPDEVGRLEVLGIHTKNMKLAEEVDLERISKDTHGYVGADLAALCTEAALQCIREKMDVLDLEDDTIDAEVLNSMAVTNEHFQTALGTSNPSALRETVVEVPNVSWEDIGGLENVKRELQETVQYPVEPPEKFEKFGMSPSKGVLFYGPPGCGKTLLAKAIANECQANFISVKGPELLTMWFGESEANVREIFDKARQSAPCVLFFDELDSIATQRGSSSGDAGGAADRVLNQLLTEMDGMNAKKTVFIIGATNRPDIIDPALLRPGRLDQLIYIPLPDEDSRHQIFKACLRKSPLSKDIDLRALAKHTQGFSGADVTEICQRACKYAIRENIEKDIEREKRRQENPDSMDEDVDEVPEIKPAHFEESMKYARRSVSDADIRKYQAFAQTLQQSRGFGTEFRFADTSGGATAAADPFATSNAAADDDDLYS</sequence>
<reference key="1">
    <citation type="submission" date="1996-11" db="EMBL/GenBank/DDBJ databases">
        <authorList>
            <person name="Akrim S."/>
            <person name="Houlne G."/>
            <person name="Schantz M.L."/>
            <person name="Schantz R."/>
        </authorList>
    </citation>
    <scope>NUCLEOTIDE SEQUENCE [MRNA]</scope>
    <source>
        <strain>cv. Yolo Wonder</strain>
        <tissue>Fruit</tissue>
    </source>
</reference>